<evidence type="ECO:0000255" key="1">
    <source>
        <dbReference type="HAMAP-Rule" id="MF_01395"/>
    </source>
</evidence>
<evidence type="ECO:0000255" key="2">
    <source>
        <dbReference type="PROSITE-ProRule" id="PRU01136"/>
    </source>
</evidence>
<name>ACCD_LACLS</name>
<reference key="1">
    <citation type="journal article" date="2006" name="Proc. Natl. Acad. Sci. U.S.A.">
        <title>Comparative genomics of the lactic acid bacteria.</title>
        <authorList>
            <person name="Makarova K.S."/>
            <person name="Slesarev A."/>
            <person name="Wolf Y.I."/>
            <person name="Sorokin A."/>
            <person name="Mirkin B."/>
            <person name="Koonin E.V."/>
            <person name="Pavlov A."/>
            <person name="Pavlova N."/>
            <person name="Karamychev V."/>
            <person name="Polouchine N."/>
            <person name="Shakhova V."/>
            <person name="Grigoriev I."/>
            <person name="Lou Y."/>
            <person name="Rohksar D."/>
            <person name="Lucas S."/>
            <person name="Huang K."/>
            <person name="Goodstein D.M."/>
            <person name="Hawkins T."/>
            <person name="Plengvidhya V."/>
            <person name="Welker D."/>
            <person name="Hughes J."/>
            <person name="Goh Y."/>
            <person name="Benson A."/>
            <person name="Baldwin K."/>
            <person name="Lee J.-H."/>
            <person name="Diaz-Muniz I."/>
            <person name="Dosti B."/>
            <person name="Smeianov V."/>
            <person name="Wechter W."/>
            <person name="Barabote R."/>
            <person name="Lorca G."/>
            <person name="Altermann E."/>
            <person name="Barrangou R."/>
            <person name="Ganesan B."/>
            <person name="Xie Y."/>
            <person name="Rawsthorne H."/>
            <person name="Tamir D."/>
            <person name="Parker C."/>
            <person name="Breidt F."/>
            <person name="Broadbent J.R."/>
            <person name="Hutkins R."/>
            <person name="O'Sullivan D."/>
            <person name="Steele J."/>
            <person name="Unlu G."/>
            <person name="Saier M.H. Jr."/>
            <person name="Klaenhammer T."/>
            <person name="Richardson P."/>
            <person name="Kozyavkin S."/>
            <person name="Weimer B.C."/>
            <person name="Mills D.A."/>
        </authorList>
    </citation>
    <scope>NUCLEOTIDE SEQUENCE [LARGE SCALE GENOMIC DNA]</scope>
    <source>
        <strain>SK11</strain>
    </source>
</reference>
<accession>Q030J0</accession>
<feature type="chain" id="PRO_0000389776" description="Acetyl-coenzyme A carboxylase carboxyl transferase subunit beta">
    <location>
        <begin position="1"/>
        <end position="288"/>
    </location>
</feature>
<feature type="domain" description="CoA carboxyltransferase N-terminal" evidence="2">
    <location>
        <begin position="32"/>
        <end position="288"/>
    </location>
</feature>
<feature type="zinc finger region" description="C4-type" evidence="1">
    <location>
        <begin position="36"/>
        <end position="57"/>
    </location>
</feature>
<feature type="binding site" evidence="1">
    <location>
        <position position="36"/>
    </location>
    <ligand>
        <name>Zn(2+)</name>
        <dbReference type="ChEBI" id="CHEBI:29105"/>
    </ligand>
</feature>
<feature type="binding site" evidence="1">
    <location>
        <position position="39"/>
    </location>
    <ligand>
        <name>Zn(2+)</name>
        <dbReference type="ChEBI" id="CHEBI:29105"/>
    </ligand>
</feature>
<feature type="binding site" evidence="1">
    <location>
        <position position="54"/>
    </location>
    <ligand>
        <name>Zn(2+)</name>
        <dbReference type="ChEBI" id="CHEBI:29105"/>
    </ligand>
</feature>
<feature type="binding site" evidence="1">
    <location>
        <position position="57"/>
    </location>
    <ligand>
        <name>Zn(2+)</name>
        <dbReference type="ChEBI" id="CHEBI:29105"/>
    </ligand>
</feature>
<gene>
    <name evidence="1" type="primary">accD</name>
    <name type="ordered locus">LACR_0829</name>
</gene>
<keyword id="KW-0067">ATP-binding</keyword>
<keyword id="KW-0963">Cytoplasm</keyword>
<keyword id="KW-0275">Fatty acid biosynthesis</keyword>
<keyword id="KW-0276">Fatty acid metabolism</keyword>
<keyword id="KW-0444">Lipid biosynthesis</keyword>
<keyword id="KW-0443">Lipid metabolism</keyword>
<keyword id="KW-0479">Metal-binding</keyword>
<keyword id="KW-0547">Nucleotide-binding</keyword>
<keyword id="KW-0808">Transferase</keyword>
<keyword id="KW-0862">Zinc</keyword>
<keyword id="KW-0863">Zinc-finger</keyword>
<comment type="function">
    <text evidence="1">Component of the acetyl coenzyme A carboxylase (ACC) complex. Biotin carboxylase (BC) catalyzes the carboxylation of biotin on its carrier protein (BCCP) and then the CO(2) group is transferred by the transcarboxylase to acetyl-CoA to form malonyl-CoA.</text>
</comment>
<comment type="catalytic activity">
    <reaction evidence="1">
        <text>N(6)-carboxybiotinyl-L-lysyl-[protein] + acetyl-CoA = N(6)-biotinyl-L-lysyl-[protein] + malonyl-CoA</text>
        <dbReference type="Rhea" id="RHEA:54728"/>
        <dbReference type="Rhea" id="RHEA-COMP:10505"/>
        <dbReference type="Rhea" id="RHEA-COMP:10506"/>
        <dbReference type="ChEBI" id="CHEBI:57288"/>
        <dbReference type="ChEBI" id="CHEBI:57384"/>
        <dbReference type="ChEBI" id="CHEBI:83144"/>
        <dbReference type="ChEBI" id="CHEBI:83145"/>
        <dbReference type="EC" id="2.1.3.15"/>
    </reaction>
</comment>
<comment type="cofactor">
    <cofactor evidence="1">
        <name>Zn(2+)</name>
        <dbReference type="ChEBI" id="CHEBI:29105"/>
    </cofactor>
    <text evidence="1">Binds 1 zinc ion per subunit.</text>
</comment>
<comment type="pathway">
    <text evidence="1">Lipid metabolism; malonyl-CoA biosynthesis; malonyl-CoA from acetyl-CoA: step 1/1.</text>
</comment>
<comment type="subunit">
    <text evidence="1">Acetyl-CoA carboxylase is a heterohexamer composed of biotin carboxyl carrier protein (AccB), biotin carboxylase (AccC) and two subunits each of ACCase subunit alpha (AccA) and ACCase subunit beta (AccD).</text>
</comment>
<comment type="subcellular location">
    <subcellularLocation>
        <location evidence="1">Cytoplasm</location>
    </subcellularLocation>
</comment>
<comment type="similarity">
    <text evidence="1">Belongs to the AccD/PCCB family.</text>
</comment>
<proteinExistence type="inferred from homology"/>
<protein>
    <recommendedName>
        <fullName evidence="1">Acetyl-coenzyme A carboxylase carboxyl transferase subunit beta</fullName>
        <shortName evidence="1">ACCase subunit beta</shortName>
        <shortName evidence="1">Acetyl-CoA carboxylase carboxyltransferase subunit beta</shortName>
        <ecNumber evidence="1">2.1.3.15</ecNumber>
    </recommendedName>
</protein>
<dbReference type="EC" id="2.1.3.15" evidence="1"/>
<dbReference type="EMBL" id="CP000425">
    <property type="protein sequence ID" value="ABJ72382.1"/>
    <property type="molecule type" value="Genomic_DNA"/>
</dbReference>
<dbReference type="RefSeq" id="WP_011675911.1">
    <property type="nucleotide sequence ID" value="NC_008527.1"/>
</dbReference>
<dbReference type="SMR" id="Q030J0"/>
<dbReference type="KEGG" id="llc:LACR_0829"/>
<dbReference type="HOGENOM" id="CLU_015486_1_1_9"/>
<dbReference type="UniPathway" id="UPA00655">
    <property type="reaction ID" value="UER00711"/>
</dbReference>
<dbReference type="Proteomes" id="UP000000240">
    <property type="component" value="Chromosome"/>
</dbReference>
<dbReference type="GO" id="GO:0009317">
    <property type="term" value="C:acetyl-CoA carboxylase complex"/>
    <property type="evidence" value="ECO:0007669"/>
    <property type="project" value="InterPro"/>
</dbReference>
<dbReference type="GO" id="GO:0003989">
    <property type="term" value="F:acetyl-CoA carboxylase activity"/>
    <property type="evidence" value="ECO:0007669"/>
    <property type="project" value="InterPro"/>
</dbReference>
<dbReference type="GO" id="GO:0005524">
    <property type="term" value="F:ATP binding"/>
    <property type="evidence" value="ECO:0007669"/>
    <property type="project" value="UniProtKB-KW"/>
</dbReference>
<dbReference type="GO" id="GO:0016743">
    <property type="term" value="F:carboxyl- or carbamoyltransferase activity"/>
    <property type="evidence" value="ECO:0007669"/>
    <property type="project" value="UniProtKB-UniRule"/>
</dbReference>
<dbReference type="GO" id="GO:0008270">
    <property type="term" value="F:zinc ion binding"/>
    <property type="evidence" value="ECO:0007669"/>
    <property type="project" value="UniProtKB-UniRule"/>
</dbReference>
<dbReference type="GO" id="GO:0006633">
    <property type="term" value="P:fatty acid biosynthetic process"/>
    <property type="evidence" value="ECO:0007669"/>
    <property type="project" value="UniProtKB-KW"/>
</dbReference>
<dbReference type="GO" id="GO:2001295">
    <property type="term" value="P:malonyl-CoA biosynthetic process"/>
    <property type="evidence" value="ECO:0007669"/>
    <property type="project" value="UniProtKB-UniRule"/>
</dbReference>
<dbReference type="Gene3D" id="3.90.226.10">
    <property type="entry name" value="2-enoyl-CoA Hydratase, Chain A, domain 1"/>
    <property type="match status" value="1"/>
</dbReference>
<dbReference type="HAMAP" id="MF_01395">
    <property type="entry name" value="AcetylCoA_CT_beta"/>
    <property type="match status" value="1"/>
</dbReference>
<dbReference type="InterPro" id="IPR034733">
    <property type="entry name" value="AcCoA_carboxyl_beta"/>
</dbReference>
<dbReference type="InterPro" id="IPR000438">
    <property type="entry name" value="Acetyl_CoA_COase_Trfase_b_su"/>
</dbReference>
<dbReference type="InterPro" id="IPR029045">
    <property type="entry name" value="ClpP/crotonase-like_dom_sf"/>
</dbReference>
<dbReference type="InterPro" id="IPR011762">
    <property type="entry name" value="COA_CT_N"/>
</dbReference>
<dbReference type="InterPro" id="IPR041010">
    <property type="entry name" value="Znf-ACC"/>
</dbReference>
<dbReference type="NCBIfam" id="TIGR00515">
    <property type="entry name" value="accD"/>
    <property type="match status" value="1"/>
</dbReference>
<dbReference type="PANTHER" id="PTHR42995">
    <property type="entry name" value="ACETYL-COENZYME A CARBOXYLASE CARBOXYL TRANSFERASE SUBUNIT BETA, CHLOROPLASTIC"/>
    <property type="match status" value="1"/>
</dbReference>
<dbReference type="PANTHER" id="PTHR42995:SF5">
    <property type="entry name" value="ACETYL-COENZYME A CARBOXYLASE CARBOXYL TRANSFERASE SUBUNIT BETA, CHLOROPLASTIC"/>
    <property type="match status" value="1"/>
</dbReference>
<dbReference type="Pfam" id="PF01039">
    <property type="entry name" value="Carboxyl_trans"/>
    <property type="match status" value="1"/>
</dbReference>
<dbReference type="Pfam" id="PF17848">
    <property type="entry name" value="Zn_ribbon_ACC"/>
    <property type="match status" value="1"/>
</dbReference>
<dbReference type="PRINTS" id="PR01070">
    <property type="entry name" value="ACCCTRFRASEB"/>
</dbReference>
<dbReference type="SUPFAM" id="SSF52096">
    <property type="entry name" value="ClpP/crotonase"/>
    <property type="match status" value="1"/>
</dbReference>
<dbReference type="PROSITE" id="PS50980">
    <property type="entry name" value="COA_CT_NTER"/>
    <property type="match status" value="1"/>
</dbReference>
<organism>
    <name type="scientific">Lactococcus lactis subsp. cremoris (strain SK11)</name>
    <dbReference type="NCBI Taxonomy" id="272622"/>
    <lineage>
        <taxon>Bacteria</taxon>
        <taxon>Bacillati</taxon>
        <taxon>Bacillota</taxon>
        <taxon>Bacilli</taxon>
        <taxon>Lactobacillales</taxon>
        <taxon>Streptococcaceae</taxon>
        <taxon>Lactococcus</taxon>
        <taxon>Lactococcus cremoris subsp. cremoris</taxon>
    </lineage>
</organism>
<sequence length="288" mass="31782">MALFQKKKYIKINPNRSIIEKQAEHPEVPDELFAKCPACKHTIYQKDLGKNKVCPNCDYNFRITAKERLAIVADKDSFVEMFTGIDSKNPLDFPGYPEKLAATKARTGLDEAIMTGVATIKGQKTALAIMDSTFIMASMGTVVGEKLTRLFEHATTEKLPIIVFTASGGARMQEGIMSLMQMAKTSAAVKRHSNAGLFYITVLTDPTTGGVTASFASLGDIILAEPQSLIGFAGRRVIEQTVRQTLPDDFQKAEFLLNHGFVDAIVKRNELRQKLALLLELHTEVENV</sequence>